<comment type="catalytic activity">
    <reaction evidence="1">
        <text>2-(N(omega)-L-arginino)succinate = fumarate + L-arginine</text>
        <dbReference type="Rhea" id="RHEA:24020"/>
        <dbReference type="ChEBI" id="CHEBI:29806"/>
        <dbReference type="ChEBI" id="CHEBI:32682"/>
        <dbReference type="ChEBI" id="CHEBI:57472"/>
        <dbReference type="EC" id="4.3.2.1"/>
    </reaction>
</comment>
<comment type="pathway">
    <text evidence="1">Amino-acid biosynthesis; L-arginine biosynthesis; L-arginine from L-ornithine and carbamoyl phosphate: step 3/3.</text>
</comment>
<comment type="subcellular location">
    <subcellularLocation>
        <location evidence="1">Cytoplasm</location>
    </subcellularLocation>
</comment>
<comment type="similarity">
    <text evidence="1">Belongs to the lyase 1 family. Argininosuccinate lyase subfamily.</text>
</comment>
<proteinExistence type="inferred from homology"/>
<name>ARLY_SHEON</name>
<gene>
    <name evidence="1" type="primary">argH</name>
    <name type="ordered locus">SO_0279</name>
</gene>
<organism>
    <name type="scientific">Shewanella oneidensis (strain ATCC 700550 / JCM 31522 / CIP 106686 / LMG 19005 / NCIMB 14063 / MR-1)</name>
    <dbReference type="NCBI Taxonomy" id="211586"/>
    <lineage>
        <taxon>Bacteria</taxon>
        <taxon>Pseudomonadati</taxon>
        <taxon>Pseudomonadota</taxon>
        <taxon>Gammaproteobacteria</taxon>
        <taxon>Alteromonadales</taxon>
        <taxon>Shewanellaceae</taxon>
        <taxon>Shewanella</taxon>
    </lineage>
</organism>
<evidence type="ECO:0000255" key="1">
    <source>
        <dbReference type="HAMAP-Rule" id="MF_00006"/>
    </source>
</evidence>
<reference key="1">
    <citation type="journal article" date="2002" name="Nat. Biotechnol.">
        <title>Genome sequence of the dissimilatory metal ion-reducing bacterium Shewanella oneidensis.</title>
        <authorList>
            <person name="Heidelberg J.F."/>
            <person name="Paulsen I.T."/>
            <person name="Nelson K.E."/>
            <person name="Gaidos E.J."/>
            <person name="Nelson W.C."/>
            <person name="Read T.D."/>
            <person name="Eisen J.A."/>
            <person name="Seshadri R."/>
            <person name="Ward N.L."/>
            <person name="Methe B.A."/>
            <person name="Clayton R.A."/>
            <person name="Meyer T."/>
            <person name="Tsapin A."/>
            <person name="Scott J."/>
            <person name="Beanan M.J."/>
            <person name="Brinkac L.M."/>
            <person name="Daugherty S.C."/>
            <person name="DeBoy R.T."/>
            <person name="Dodson R.J."/>
            <person name="Durkin A.S."/>
            <person name="Haft D.H."/>
            <person name="Kolonay J.F."/>
            <person name="Madupu R."/>
            <person name="Peterson J.D."/>
            <person name="Umayam L.A."/>
            <person name="White O."/>
            <person name="Wolf A.M."/>
            <person name="Vamathevan J.J."/>
            <person name="Weidman J.F."/>
            <person name="Impraim M."/>
            <person name="Lee K."/>
            <person name="Berry K.J."/>
            <person name="Lee C."/>
            <person name="Mueller J."/>
            <person name="Khouri H.M."/>
            <person name="Gill J."/>
            <person name="Utterback T.R."/>
            <person name="McDonald L.A."/>
            <person name="Feldblyum T.V."/>
            <person name="Smith H.O."/>
            <person name="Venter J.C."/>
            <person name="Nealson K.H."/>
            <person name="Fraser C.M."/>
        </authorList>
    </citation>
    <scope>NUCLEOTIDE SEQUENCE [LARGE SCALE GENOMIC DNA]</scope>
    <source>
        <strain>ATCC 700550 / JCM 31522 / CIP 106686 / LMG 19005 / NCIMB 14063 / MR-1</strain>
    </source>
</reference>
<sequence>MALWGGRFQGETSALFKLFNDSLPVDYRLFEQDVVGSIAWADAIASVGIITATECSDLKKALNELLVEVKGDPAIILASGAEDIHSFVESALIAKVGDLGKKLHTGRSRNDQVATDLKLWCQSEGAALVARLQTLRSELIALAEREFDAVMPGYTHLQRAQPVTFGHWCLAYVEMIERDFSRLTDALKRANTCPLGSGALAGTAYQMDRHALALALNFASPTLNSLDSVSDRDHVVELCSTASISMMHLSRMAEDLIFFNTGEAGFISLSDEVTSGSSLMPQKKNPDALELIRGKTGRVYGSLVGILTTMKALPLAYNKDMQEDKEGLFDVVDSWAICLDMAALVLSGLVVNRPNALLAAQQGYANATELADYLVSKGMPFREAHHVVGVAVVAAIAKKIPLEGFTLAEFKTFADIIEDDVYPNLTIEACLAKRDVLGGTALTQVKQAIAAKKAG</sequence>
<feature type="chain" id="PRO_0000137819" description="Argininosuccinate lyase">
    <location>
        <begin position="1"/>
        <end position="455"/>
    </location>
</feature>
<protein>
    <recommendedName>
        <fullName evidence="1">Argininosuccinate lyase</fullName>
        <shortName evidence="1">ASAL</shortName>
        <ecNumber evidence="1">4.3.2.1</ecNumber>
    </recommendedName>
    <alternativeName>
        <fullName evidence="1">Arginosuccinase</fullName>
    </alternativeName>
</protein>
<accession>Q8EK27</accession>
<keyword id="KW-0028">Amino-acid biosynthesis</keyword>
<keyword id="KW-0055">Arginine biosynthesis</keyword>
<keyword id="KW-0963">Cytoplasm</keyword>
<keyword id="KW-0456">Lyase</keyword>
<keyword id="KW-1185">Reference proteome</keyword>
<dbReference type="EC" id="4.3.2.1" evidence="1"/>
<dbReference type="EMBL" id="AE014299">
    <property type="protein sequence ID" value="AAN53364.1"/>
    <property type="molecule type" value="Genomic_DNA"/>
</dbReference>
<dbReference type="RefSeq" id="NP_715919.1">
    <property type="nucleotide sequence ID" value="NC_004347.2"/>
</dbReference>
<dbReference type="RefSeq" id="WP_011070651.1">
    <property type="nucleotide sequence ID" value="NC_004347.2"/>
</dbReference>
<dbReference type="SMR" id="Q8EK27"/>
<dbReference type="STRING" id="211586.SO_0279"/>
<dbReference type="PaxDb" id="211586-SO_0279"/>
<dbReference type="KEGG" id="son:SO_0279"/>
<dbReference type="PATRIC" id="fig|211586.12.peg.270"/>
<dbReference type="eggNOG" id="COG0165">
    <property type="taxonomic scope" value="Bacteria"/>
</dbReference>
<dbReference type="HOGENOM" id="CLU_027272_2_3_6"/>
<dbReference type="OrthoDB" id="9769623at2"/>
<dbReference type="PhylomeDB" id="Q8EK27"/>
<dbReference type="BioCyc" id="SONE211586:G1GMP-269-MONOMER"/>
<dbReference type="UniPathway" id="UPA00068">
    <property type="reaction ID" value="UER00114"/>
</dbReference>
<dbReference type="Proteomes" id="UP000008186">
    <property type="component" value="Chromosome"/>
</dbReference>
<dbReference type="GO" id="GO:0005829">
    <property type="term" value="C:cytosol"/>
    <property type="evidence" value="ECO:0000318"/>
    <property type="project" value="GO_Central"/>
</dbReference>
<dbReference type="GO" id="GO:0004056">
    <property type="term" value="F:argininosuccinate lyase activity"/>
    <property type="evidence" value="ECO:0000318"/>
    <property type="project" value="GO_Central"/>
</dbReference>
<dbReference type="GO" id="GO:0042450">
    <property type="term" value="P:arginine biosynthetic process via ornithine"/>
    <property type="evidence" value="ECO:0000318"/>
    <property type="project" value="GO_Central"/>
</dbReference>
<dbReference type="GO" id="GO:0006526">
    <property type="term" value="P:L-arginine biosynthetic process"/>
    <property type="evidence" value="ECO:0007669"/>
    <property type="project" value="UniProtKB-UniRule"/>
</dbReference>
<dbReference type="CDD" id="cd01359">
    <property type="entry name" value="Argininosuccinate_lyase"/>
    <property type="match status" value="1"/>
</dbReference>
<dbReference type="FunFam" id="1.10.40.30:FF:000001">
    <property type="entry name" value="Argininosuccinate lyase"/>
    <property type="match status" value="1"/>
</dbReference>
<dbReference type="FunFam" id="1.20.200.10:FF:000006">
    <property type="entry name" value="Argininosuccinate lyase"/>
    <property type="match status" value="1"/>
</dbReference>
<dbReference type="Gene3D" id="1.10.40.30">
    <property type="entry name" value="Fumarase/aspartase (C-terminal domain)"/>
    <property type="match status" value="1"/>
</dbReference>
<dbReference type="Gene3D" id="1.20.200.10">
    <property type="entry name" value="Fumarase/aspartase (Central domain)"/>
    <property type="match status" value="1"/>
</dbReference>
<dbReference type="Gene3D" id="1.10.275.10">
    <property type="entry name" value="Fumarase/aspartase (N-terminal domain)"/>
    <property type="match status" value="1"/>
</dbReference>
<dbReference type="HAMAP" id="MF_00006">
    <property type="entry name" value="Arg_succ_lyase"/>
    <property type="match status" value="1"/>
</dbReference>
<dbReference type="InterPro" id="IPR029419">
    <property type="entry name" value="Arg_succ_lyase_C"/>
</dbReference>
<dbReference type="InterPro" id="IPR009049">
    <property type="entry name" value="Argininosuccinate_lyase"/>
</dbReference>
<dbReference type="InterPro" id="IPR024083">
    <property type="entry name" value="Fumarase/histidase_N"/>
</dbReference>
<dbReference type="InterPro" id="IPR020557">
    <property type="entry name" value="Fumarate_lyase_CS"/>
</dbReference>
<dbReference type="InterPro" id="IPR000362">
    <property type="entry name" value="Fumarate_lyase_fam"/>
</dbReference>
<dbReference type="InterPro" id="IPR022761">
    <property type="entry name" value="Fumarate_lyase_N"/>
</dbReference>
<dbReference type="InterPro" id="IPR008948">
    <property type="entry name" value="L-Aspartase-like"/>
</dbReference>
<dbReference type="NCBIfam" id="TIGR00838">
    <property type="entry name" value="argH"/>
    <property type="match status" value="1"/>
</dbReference>
<dbReference type="NCBIfam" id="NF008964">
    <property type="entry name" value="PRK12308.1"/>
    <property type="match status" value="1"/>
</dbReference>
<dbReference type="PANTHER" id="PTHR43814">
    <property type="entry name" value="ARGININOSUCCINATE LYASE"/>
    <property type="match status" value="1"/>
</dbReference>
<dbReference type="PANTHER" id="PTHR43814:SF1">
    <property type="entry name" value="ARGININOSUCCINATE LYASE"/>
    <property type="match status" value="1"/>
</dbReference>
<dbReference type="Pfam" id="PF14698">
    <property type="entry name" value="ASL_C2"/>
    <property type="match status" value="1"/>
</dbReference>
<dbReference type="Pfam" id="PF00206">
    <property type="entry name" value="Lyase_1"/>
    <property type="match status" value="1"/>
</dbReference>
<dbReference type="PRINTS" id="PR00145">
    <property type="entry name" value="ARGSUCLYASE"/>
</dbReference>
<dbReference type="PRINTS" id="PR00149">
    <property type="entry name" value="FUMRATELYASE"/>
</dbReference>
<dbReference type="SUPFAM" id="SSF48557">
    <property type="entry name" value="L-aspartase-like"/>
    <property type="match status" value="1"/>
</dbReference>
<dbReference type="PROSITE" id="PS00163">
    <property type="entry name" value="FUMARATE_LYASES"/>
    <property type="match status" value="1"/>
</dbReference>